<sequence>MQHVKIYLSTAPVVATIWFGLLAGLLIEINRFFPDALLFPFP</sequence>
<gene>
    <name type="primary">psaJ</name>
</gene>
<geneLocation type="chloroplast"/>
<evidence type="ECO:0000250" key="1"/>
<evidence type="ECO:0000255" key="2"/>
<evidence type="ECO:0000269" key="3">
    <source>
    </source>
</evidence>
<evidence type="ECO:0000305" key="4"/>
<accession>Q85FK2</accession>
<dbReference type="EMBL" id="AY178864">
    <property type="protein sequence ID" value="AAP29411.2"/>
    <property type="molecule type" value="Genomic_DNA"/>
</dbReference>
<dbReference type="RefSeq" id="NP_848080.1">
    <property type="nucleotide sequence ID" value="NC_004766.1"/>
</dbReference>
<dbReference type="SMR" id="Q85FK2"/>
<dbReference type="GeneID" id="807423"/>
<dbReference type="GO" id="GO:0009535">
    <property type="term" value="C:chloroplast thylakoid membrane"/>
    <property type="evidence" value="ECO:0007669"/>
    <property type="project" value="UniProtKB-SubCell"/>
</dbReference>
<dbReference type="GO" id="GO:0009522">
    <property type="term" value="C:photosystem I"/>
    <property type="evidence" value="ECO:0007669"/>
    <property type="project" value="UniProtKB-KW"/>
</dbReference>
<dbReference type="GO" id="GO:0015979">
    <property type="term" value="P:photosynthesis"/>
    <property type="evidence" value="ECO:0007669"/>
    <property type="project" value="UniProtKB-UniRule"/>
</dbReference>
<dbReference type="Gene3D" id="1.20.5.510">
    <property type="entry name" value="Single helix bin"/>
    <property type="match status" value="1"/>
</dbReference>
<dbReference type="HAMAP" id="MF_00522">
    <property type="entry name" value="PSI_PsaJ"/>
    <property type="match status" value="1"/>
</dbReference>
<dbReference type="InterPro" id="IPR002615">
    <property type="entry name" value="PSI_PsaJ"/>
</dbReference>
<dbReference type="InterPro" id="IPR036062">
    <property type="entry name" value="PSI_PsaJ_sf"/>
</dbReference>
<dbReference type="PANTHER" id="PTHR36082">
    <property type="match status" value="1"/>
</dbReference>
<dbReference type="PANTHER" id="PTHR36082:SF2">
    <property type="entry name" value="PHOTOSYSTEM I REACTION CENTER SUBUNIT IX"/>
    <property type="match status" value="1"/>
</dbReference>
<dbReference type="Pfam" id="PF01701">
    <property type="entry name" value="PSI_PsaJ"/>
    <property type="match status" value="1"/>
</dbReference>
<dbReference type="SUPFAM" id="SSF81544">
    <property type="entry name" value="Subunit IX of photosystem I reaction centre, PsaJ"/>
    <property type="match status" value="1"/>
</dbReference>
<organism>
    <name type="scientific">Adiantum capillus-veneris</name>
    <name type="common">Maidenhair fern</name>
    <dbReference type="NCBI Taxonomy" id="13818"/>
    <lineage>
        <taxon>Eukaryota</taxon>
        <taxon>Viridiplantae</taxon>
        <taxon>Streptophyta</taxon>
        <taxon>Embryophyta</taxon>
        <taxon>Tracheophyta</taxon>
        <taxon>Polypodiopsida</taxon>
        <taxon>Polypodiidae</taxon>
        <taxon>Polypodiales</taxon>
        <taxon>Pteridineae</taxon>
        <taxon>Pteridaceae</taxon>
        <taxon>Vittarioideae</taxon>
        <taxon>Adiantum</taxon>
    </lineage>
</organism>
<comment type="function">
    <text evidence="1">May help in the organization of the PsaE and PsaF subunits.</text>
</comment>
<comment type="subcellular location">
    <subcellularLocation>
        <location evidence="1">Plastid</location>
        <location evidence="1">Chloroplast thylakoid membrane</location>
        <topology evidence="1">Single-pass membrane protein</topology>
    </subcellularLocation>
</comment>
<comment type="RNA editing">
    <location>
        <position position="29" evidence="3"/>
    </location>
</comment>
<comment type="similarity">
    <text evidence="4">Belongs to the PsaJ family.</text>
</comment>
<keyword id="KW-0150">Chloroplast</keyword>
<keyword id="KW-0472">Membrane</keyword>
<keyword id="KW-0602">Photosynthesis</keyword>
<keyword id="KW-0603">Photosystem I</keyword>
<keyword id="KW-0934">Plastid</keyword>
<keyword id="KW-0691">RNA editing</keyword>
<keyword id="KW-0793">Thylakoid</keyword>
<keyword id="KW-0812">Transmembrane</keyword>
<keyword id="KW-1133">Transmembrane helix</keyword>
<feature type="chain" id="PRO_0000207779" description="Photosystem I reaction center subunit IX">
    <location>
        <begin position="1"/>
        <end position="42"/>
    </location>
</feature>
<feature type="transmembrane region" description="Helical" evidence="2">
    <location>
        <begin position="7"/>
        <end position="27"/>
    </location>
</feature>
<reference key="1">
    <citation type="journal article" date="2003" name="DNA Res.">
        <title>Complete nucleotide sequence of the chloroplast genome from a leptosporangiate fern, Adiantum capillus-veneris L.</title>
        <authorList>
            <person name="Wolf P.G."/>
            <person name="Rowe C.A."/>
            <person name="Sinclair R.B."/>
            <person name="Hasebe M."/>
        </authorList>
    </citation>
    <scope>NUCLEOTIDE SEQUENCE [LARGE SCALE GENOMIC DNA]</scope>
</reference>
<reference key="2">
    <citation type="journal article" date="2004" name="Gene">
        <title>High levels of RNA editing in a vascular plant chloroplast genome: analysis of transcripts from the fern Adiantum capillus-veneris.</title>
        <authorList>
            <person name="Wolf P.G."/>
            <person name="Rowe C.A."/>
            <person name="Hasebe M."/>
        </authorList>
    </citation>
    <scope>NUCLEOTIDE SEQUENCE [GENOMIC DNA]</scope>
    <scope>RNA EDITING</scope>
    <source>
        <tissue>Frond</tissue>
    </source>
</reference>
<protein>
    <recommendedName>
        <fullName>Photosystem I reaction center subunit IX</fullName>
    </recommendedName>
    <alternativeName>
        <fullName>PSI-J</fullName>
    </alternativeName>
</protein>
<proteinExistence type="evidence at transcript level"/>
<name>PSAJ_ADICA</name>